<evidence type="ECO:0000269" key="1">
    <source>
    </source>
</evidence>
<evidence type="ECO:0000305" key="2"/>
<feature type="chain" id="PRO_0000096912" description="Nodulation protein S">
    <location>
        <begin position="1"/>
        <end position="207"/>
    </location>
</feature>
<dbReference type="EC" id="2.1.1.-"/>
<dbReference type="EMBL" id="L18897">
    <property type="protein sequence ID" value="AAB51165.1"/>
    <property type="molecule type" value="Genomic_DNA"/>
</dbReference>
<dbReference type="EMBL" id="AP009384">
    <property type="protein sequence ID" value="BAF89813.1"/>
    <property type="molecule type" value="Genomic_DNA"/>
</dbReference>
<dbReference type="PIR" id="JQ0397">
    <property type="entry name" value="JQ0397"/>
</dbReference>
<dbReference type="SMR" id="Q07758"/>
<dbReference type="STRING" id="438753.AZC_3815"/>
<dbReference type="KEGG" id="azc:AZC_3815"/>
<dbReference type="eggNOG" id="COG2227">
    <property type="taxonomic scope" value="Bacteria"/>
</dbReference>
<dbReference type="HOGENOM" id="CLU_1359492_0_0_5"/>
<dbReference type="Proteomes" id="UP000000270">
    <property type="component" value="Chromosome"/>
</dbReference>
<dbReference type="GO" id="GO:0008757">
    <property type="term" value="F:S-adenosylmethionine-dependent methyltransferase activity"/>
    <property type="evidence" value="ECO:0007669"/>
    <property type="project" value="InterPro"/>
</dbReference>
<dbReference type="GO" id="GO:0032259">
    <property type="term" value="P:methylation"/>
    <property type="evidence" value="ECO:0007669"/>
    <property type="project" value="UniProtKB-KW"/>
</dbReference>
<dbReference type="GO" id="GO:0009312">
    <property type="term" value="P:oligosaccharide biosynthetic process"/>
    <property type="evidence" value="ECO:0007669"/>
    <property type="project" value="InterPro"/>
</dbReference>
<dbReference type="CDD" id="cd02440">
    <property type="entry name" value="AdoMet_MTases"/>
    <property type="match status" value="1"/>
</dbReference>
<dbReference type="Gene3D" id="3.40.50.150">
    <property type="entry name" value="Vaccinia Virus protein VP39"/>
    <property type="match status" value="1"/>
</dbReference>
<dbReference type="InterPro" id="IPR020944">
    <property type="entry name" value="NodS"/>
</dbReference>
<dbReference type="InterPro" id="IPR029063">
    <property type="entry name" value="SAM-dependent_MTases_sf"/>
</dbReference>
<dbReference type="InterPro" id="IPR008715">
    <property type="entry name" value="SAM-MeTfrase_NodS-like"/>
</dbReference>
<dbReference type="PANTHER" id="PTHR43861">
    <property type="entry name" value="TRANS-ACONITATE 2-METHYLTRANSFERASE-RELATED"/>
    <property type="match status" value="1"/>
</dbReference>
<dbReference type="Pfam" id="PF05401">
    <property type="entry name" value="NodS"/>
    <property type="match status" value="1"/>
</dbReference>
<dbReference type="PIRSF" id="PIRSF009310">
    <property type="entry name" value="NodS"/>
    <property type="match status" value="1"/>
</dbReference>
<dbReference type="SUPFAM" id="SSF53335">
    <property type="entry name" value="S-adenosyl-L-methionine-dependent methyltransferases"/>
    <property type="match status" value="1"/>
</dbReference>
<keyword id="KW-0489">Methyltransferase</keyword>
<keyword id="KW-0536">Nodulation</keyword>
<keyword id="KW-1185">Reference proteome</keyword>
<keyword id="KW-0808">Transferase</keyword>
<proteinExistence type="inferred from homology"/>
<organism>
    <name type="scientific">Azorhizobium caulinodans (strain ATCC 43989 / DSM 5975 / JCM 20966 / LMG 6465 / NBRC 14845 / NCIMB 13405 / ORS 571)</name>
    <dbReference type="NCBI Taxonomy" id="438753"/>
    <lineage>
        <taxon>Bacteria</taxon>
        <taxon>Pseudomonadati</taxon>
        <taxon>Pseudomonadota</taxon>
        <taxon>Alphaproteobacteria</taxon>
        <taxon>Hyphomicrobiales</taxon>
        <taxon>Xanthobacteraceae</taxon>
        <taxon>Azorhizobium</taxon>
    </lineage>
</organism>
<comment type="function">
    <text evidence="1">SAM-utilizing methyltransferase involved in nod factor synthesis.</text>
</comment>
<comment type="similarity">
    <text evidence="2">Belongs to the NodS family.</text>
</comment>
<accession>Q07758</accession>
<accession>A8IP04</accession>
<name>NODS_AZOC5</name>
<reference key="1">
    <citation type="journal article" date="1989" name="Mol. Gen. Genet.">
        <title>Common nodABC genes in Nod locus 1 of Azorhizobium caulinodans: nucleotide sequence and plant-inducible expression.</title>
        <authorList>
            <person name="Goethals K."/>
            <person name="Gao M."/>
            <person name="Tomekpe K."/>
            <person name="van Montagu M."/>
            <person name="Holsters M."/>
        </authorList>
    </citation>
    <scope>NUCLEOTIDE SEQUENCE [GENOMIC DNA]</scope>
</reference>
<reference key="2">
    <citation type="submission" date="2007-04" db="EMBL/GenBank/DDBJ databases">
        <title>Complete genome sequence of the nitrogen-fixing bacterium Azorhizobium caulinodans ORS571.</title>
        <authorList>
            <person name="Lee K.B."/>
            <person name="Backer P.D."/>
            <person name="Aono T."/>
            <person name="Liu C.T."/>
            <person name="Suzuki S."/>
            <person name="Suzuki T."/>
            <person name="Kaneko T."/>
            <person name="Yamada M."/>
            <person name="Tabata S."/>
            <person name="Kupfer D.M."/>
            <person name="Najar F.Z."/>
            <person name="Wiley G.B."/>
            <person name="Roe B."/>
            <person name="Binnewies T."/>
            <person name="Ussery D."/>
            <person name="Vereecke D."/>
            <person name="Gevers D."/>
            <person name="Holsters M."/>
            <person name="Oyaizu H."/>
        </authorList>
    </citation>
    <scope>NUCLEOTIDE SEQUENCE [LARGE SCALE GENOMIC DNA]</scope>
    <source>
        <strain>ATCC 43989 / DSM 5975 / JCM 20966 / LMG 6465 / NBRC 14845 / NCIMB 13405 / ORS 571</strain>
    </source>
</reference>
<reference key="3">
    <citation type="journal article" date="1993" name="Mol. Microbiol.">
        <title>Identification of nodSUIJ genes in Nod locus 1 of Azorhizobium caulinodans: evidence that nodS encodes a methyltransferase involved in Nod factor modification.</title>
        <authorList>
            <person name="Geelen D."/>
            <person name="Mergaert P."/>
            <person name="Geremia R.A."/>
            <person name="Goormachtig S."/>
            <person name="van Montagu M."/>
            <person name="Holsters M."/>
        </authorList>
    </citation>
    <scope>FUNCTION</scope>
</reference>
<protein>
    <recommendedName>
        <fullName>Nodulation protein S</fullName>
        <ecNumber>2.1.1.-</ecNumber>
    </recommendedName>
</protein>
<gene>
    <name type="primary">nodS</name>
    <name type="ordered locus">AZC_3815</name>
</gene>
<sequence length="207" mass="23226">MEDPDLVATNLSPAGVKDLLRKDLDARDPWNISSCEYEQKRLHAIMELCLGGRTLGDVLEIGCAAGALTERLSIYSQSLTVVELMTEAIAKAQERVNNSDIIWHEQDVCQMDLNAKYDTIICTEVLYYIHEKERLRGALENIVQLLRSDGQFIFGSPRNAVCRSWGHLFGAEAVLELAQSRLRIVDLRRINGGLPGQDCVIAKLTRR</sequence>